<evidence type="ECO:0000255" key="1">
    <source>
        <dbReference type="HAMAP-Rule" id="MF_01341"/>
    </source>
</evidence>
<evidence type="ECO:0000256" key="2">
    <source>
        <dbReference type="SAM" id="MobiDB-lite"/>
    </source>
</evidence>
<evidence type="ECO:0000305" key="3"/>
<organism>
    <name type="scientific">Prochlorococcus marinus (strain MIT 9301)</name>
    <dbReference type="NCBI Taxonomy" id="167546"/>
    <lineage>
        <taxon>Bacteria</taxon>
        <taxon>Bacillati</taxon>
        <taxon>Cyanobacteriota</taxon>
        <taxon>Cyanophyceae</taxon>
        <taxon>Synechococcales</taxon>
        <taxon>Prochlorococcaceae</taxon>
        <taxon>Prochlorococcus</taxon>
    </lineage>
</organism>
<reference key="1">
    <citation type="journal article" date="2007" name="PLoS Genet.">
        <title>Patterns and implications of gene gain and loss in the evolution of Prochlorococcus.</title>
        <authorList>
            <person name="Kettler G.C."/>
            <person name="Martiny A.C."/>
            <person name="Huang K."/>
            <person name="Zucker J."/>
            <person name="Coleman M.L."/>
            <person name="Rodrigue S."/>
            <person name="Chen F."/>
            <person name="Lapidus A."/>
            <person name="Ferriera S."/>
            <person name="Johnson J."/>
            <person name="Steglich C."/>
            <person name="Church G.M."/>
            <person name="Richardson P."/>
            <person name="Chisholm S.W."/>
        </authorList>
    </citation>
    <scope>NUCLEOTIDE SEQUENCE [LARGE SCALE GENOMIC DNA]</scope>
    <source>
        <strain>MIT 9301</strain>
    </source>
</reference>
<protein>
    <recommendedName>
        <fullName evidence="1">Large ribosomal subunit protein uL15</fullName>
    </recommendedName>
    <alternativeName>
        <fullName evidence="3">50S ribosomal protein L15</fullName>
    </alternativeName>
</protein>
<gene>
    <name evidence="1" type="primary">rplO</name>
    <name type="ordered locus">P9301_17321</name>
</gene>
<dbReference type="EMBL" id="CP000576">
    <property type="protein sequence ID" value="ABO18355.1"/>
    <property type="molecule type" value="Genomic_DNA"/>
</dbReference>
<dbReference type="RefSeq" id="WP_011863647.1">
    <property type="nucleotide sequence ID" value="NC_009091.1"/>
</dbReference>
<dbReference type="SMR" id="A3PF30"/>
<dbReference type="STRING" id="167546.P9301_17321"/>
<dbReference type="KEGG" id="pmg:P9301_17321"/>
<dbReference type="eggNOG" id="COG0200">
    <property type="taxonomic scope" value="Bacteria"/>
</dbReference>
<dbReference type="HOGENOM" id="CLU_055188_4_1_3"/>
<dbReference type="OrthoDB" id="9810293at2"/>
<dbReference type="Proteomes" id="UP000001430">
    <property type="component" value="Chromosome"/>
</dbReference>
<dbReference type="GO" id="GO:0022625">
    <property type="term" value="C:cytosolic large ribosomal subunit"/>
    <property type="evidence" value="ECO:0007669"/>
    <property type="project" value="TreeGrafter"/>
</dbReference>
<dbReference type="GO" id="GO:0019843">
    <property type="term" value="F:rRNA binding"/>
    <property type="evidence" value="ECO:0007669"/>
    <property type="project" value="UniProtKB-UniRule"/>
</dbReference>
<dbReference type="GO" id="GO:0003735">
    <property type="term" value="F:structural constituent of ribosome"/>
    <property type="evidence" value="ECO:0007669"/>
    <property type="project" value="InterPro"/>
</dbReference>
<dbReference type="GO" id="GO:0006412">
    <property type="term" value="P:translation"/>
    <property type="evidence" value="ECO:0007669"/>
    <property type="project" value="UniProtKB-UniRule"/>
</dbReference>
<dbReference type="Gene3D" id="3.100.10.10">
    <property type="match status" value="1"/>
</dbReference>
<dbReference type="HAMAP" id="MF_01341">
    <property type="entry name" value="Ribosomal_uL15"/>
    <property type="match status" value="1"/>
</dbReference>
<dbReference type="InterPro" id="IPR030878">
    <property type="entry name" value="Ribosomal_uL15"/>
</dbReference>
<dbReference type="InterPro" id="IPR021131">
    <property type="entry name" value="Ribosomal_uL15/eL18"/>
</dbReference>
<dbReference type="InterPro" id="IPR036227">
    <property type="entry name" value="Ribosomal_uL15/eL18_sf"/>
</dbReference>
<dbReference type="InterPro" id="IPR005749">
    <property type="entry name" value="Ribosomal_uL15_bac-type"/>
</dbReference>
<dbReference type="InterPro" id="IPR001196">
    <property type="entry name" value="Ribosomal_uL15_CS"/>
</dbReference>
<dbReference type="NCBIfam" id="TIGR01071">
    <property type="entry name" value="rplO_bact"/>
    <property type="match status" value="1"/>
</dbReference>
<dbReference type="PANTHER" id="PTHR12934">
    <property type="entry name" value="50S RIBOSOMAL PROTEIN L15"/>
    <property type="match status" value="1"/>
</dbReference>
<dbReference type="PANTHER" id="PTHR12934:SF11">
    <property type="entry name" value="LARGE RIBOSOMAL SUBUNIT PROTEIN UL15M"/>
    <property type="match status" value="1"/>
</dbReference>
<dbReference type="Pfam" id="PF00828">
    <property type="entry name" value="Ribosomal_L27A"/>
    <property type="match status" value="1"/>
</dbReference>
<dbReference type="SUPFAM" id="SSF52080">
    <property type="entry name" value="Ribosomal proteins L15p and L18e"/>
    <property type="match status" value="1"/>
</dbReference>
<dbReference type="PROSITE" id="PS00475">
    <property type="entry name" value="RIBOSOMAL_L15"/>
    <property type="match status" value="1"/>
</dbReference>
<feature type="chain" id="PRO_1000054512" description="Large ribosomal subunit protein uL15">
    <location>
        <begin position="1"/>
        <end position="152"/>
    </location>
</feature>
<feature type="region of interest" description="Disordered" evidence="2">
    <location>
        <begin position="1"/>
        <end position="57"/>
    </location>
</feature>
<feature type="compositionally biased region" description="Basic residues" evidence="2">
    <location>
        <begin position="14"/>
        <end position="23"/>
    </location>
</feature>
<feature type="compositionally biased region" description="Gly residues" evidence="2">
    <location>
        <begin position="25"/>
        <end position="37"/>
    </location>
</feature>
<sequence length="152" mass="16784">MTSTLNTLKSNSGSRKKKLRKGRGIAAGQGASCGFGMRGQKSRSGRPTRPGFEGGQMPLYRRVPKLKHFEIINQKNFSIINLEKLNDFKDNDTVNLDSLVKKGLIFKPKFPLKILGNGKLNVKLKVQAHAFTKVAKQKIEDAGGSCELINNK</sequence>
<keyword id="KW-1185">Reference proteome</keyword>
<keyword id="KW-0687">Ribonucleoprotein</keyword>
<keyword id="KW-0689">Ribosomal protein</keyword>
<keyword id="KW-0694">RNA-binding</keyword>
<keyword id="KW-0699">rRNA-binding</keyword>
<comment type="function">
    <text evidence="1">Binds to the 23S rRNA.</text>
</comment>
<comment type="subunit">
    <text evidence="1">Part of the 50S ribosomal subunit.</text>
</comment>
<comment type="similarity">
    <text evidence="1">Belongs to the universal ribosomal protein uL15 family.</text>
</comment>
<name>RL15_PROM0</name>
<proteinExistence type="inferred from homology"/>
<accession>A3PF30</accession>